<gene>
    <name evidence="1" type="primary">psmB1</name>
    <name type="ordered locus">TK1429</name>
</gene>
<comment type="function">
    <text evidence="1">Component of the proteasome core, a large protease complex with broad specificity involved in protein degradation.</text>
</comment>
<comment type="catalytic activity">
    <reaction evidence="1">
        <text>Cleavage of peptide bonds with very broad specificity.</text>
        <dbReference type="EC" id="3.4.25.1"/>
    </reaction>
</comment>
<comment type="activity regulation">
    <text evidence="1">The formation of the proteasomal ATPase PAN-20S proteasome complex, via the docking of the C-termini of PAN into the intersubunit pockets in the alpha-rings, triggers opening of the gate for substrate entry. Interconversion between the open-gate and close-gate conformations leads to a dynamic regulation of the 20S proteasome proteolysis activity.</text>
</comment>
<comment type="subunit">
    <text evidence="1">The 20S proteasome core is composed of 14 alpha and 14 beta subunits that assemble into four stacked heptameric rings, resulting in a barrel-shaped structure. The two inner rings, each composed of seven catalytic beta subunits, are sandwiched by two outer rings, each composed of seven alpha subunits. The catalytic chamber with the active sites is on the inside of the barrel. Has a gated structure, the ends of the cylinder being occluded by the N-termini of the alpha-subunits. Is capped at one or both ends by the proteasome regulatory ATPase, PAN.</text>
</comment>
<comment type="subcellular location">
    <subcellularLocation>
        <location evidence="1">Cytoplasm</location>
    </subcellularLocation>
</comment>
<comment type="similarity">
    <text evidence="1">Belongs to the peptidase T1B family.</text>
</comment>
<reference key="1">
    <citation type="journal article" date="2005" name="Genome Res.">
        <title>Complete genome sequence of the hyperthermophilic archaeon Thermococcus kodakaraensis KOD1 and comparison with Pyrococcus genomes.</title>
        <authorList>
            <person name="Fukui T."/>
            <person name="Atomi H."/>
            <person name="Kanai T."/>
            <person name="Matsumi R."/>
            <person name="Fujiwara S."/>
            <person name="Imanaka T."/>
        </authorList>
    </citation>
    <scope>NUCLEOTIDE SEQUENCE [LARGE SCALE GENOMIC DNA]</scope>
    <source>
        <strain>ATCC BAA-918 / JCM 12380 / KOD1</strain>
    </source>
</reference>
<evidence type="ECO:0000255" key="1">
    <source>
        <dbReference type="HAMAP-Rule" id="MF_02113"/>
    </source>
</evidence>
<dbReference type="EC" id="3.4.25.1" evidence="1"/>
<dbReference type="EMBL" id="AP006878">
    <property type="protein sequence ID" value="BAD85618.1"/>
    <property type="molecule type" value="Genomic_DNA"/>
</dbReference>
<dbReference type="RefSeq" id="WP_011250380.1">
    <property type="nucleotide sequence ID" value="NC_006624.1"/>
</dbReference>
<dbReference type="SMR" id="Q5JDJ9"/>
<dbReference type="FunCoup" id="Q5JDJ9">
    <property type="interactions" value="126"/>
</dbReference>
<dbReference type="STRING" id="69014.TK1429"/>
<dbReference type="MEROPS" id="T01.002"/>
<dbReference type="EnsemblBacteria" id="BAD85618">
    <property type="protein sequence ID" value="BAD85618"/>
    <property type="gene ID" value="TK1429"/>
</dbReference>
<dbReference type="GeneID" id="78447953"/>
<dbReference type="KEGG" id="tko:TK1429"/>
<dbReference type="PATRIC" id="fig|69014.16.peg.1390"/>
<dbReference type="eggNOG" id="arCOG00970">
    <property type="taxonomic scope" value="Archaea"/>
</dbReference>
<dbReference type="HOGENOM" id="CLU_035750_7_2_2"/>
<dbReference type="InParanoid" id="Q5JDJ9"/>
<dbReference type="OrthoDB" id="6330at2157"/>
<dbReference type="PhylomeDB" id="Q5JDJ9"/>
<dbReference type="Proteomes" id="UP000000536">
    <property type="component" value="Chromosome"/>
</dbReference>
<dbReference type="GO" id="GO:0005829">
    <property type="term" value="C:cytosol"/>
    <property type="evidence" value="ECO:0000318"/>
    <property type="project" value="GO_Central"/>
</dbReference>
<dbReference type="GO" id="GO:0019774">
    <property type="term" value="C:proteasome core complex, beta-subunit complex"/>
    <property type="evidence" value="ECO:0000318"/>
    <property type="project" value="GO_Central"/>
</dbReference>
<dbReference type="GO" id="GO:0004175">
    <property type="term" value="F:endopeptidase activity"/>
    <property type="evidence" value="ECO:0000318"/>
    <property type="project" value="GO_Central"/>
</dbReference>
<dbReference type="GO" id="GO:0004298">
    <property type="term" value="F:threonine-type endopeptidase activity"/>
    <property type="evidence" value="ECO:0007669"/>
    <property type="project" value="UniProtKB-UniRule"/>
</dbReference>
<dbReference type="GO" id="GO:0043161">
    <property type="term" value="P:proteasome-mediated ubiquitin-dependent protein catabolic process"/>
    <property type="evidence" value="ECO:0000318"/>
    <property type="project" value="GO_Central"/>
</dbReference>
<dbReference type="FunFam" id="3.60.20.10:FF:000049">
    <property type="entry name" value="Proteasome subunit beta"/>
    <property type="match status" value="1"/>
</dbReference>
<dbReference type="Gene3D" id="3.60.20.10">
    <property type="entry name" value="Glutamine Phosphoribosylpyrophosphate, subunit 1, domain 1"/>
    <property type="match status" value="1"/>
</dbReference>
<dbReference type="HAMAP" id="MF_02113_A">
    <property type="entry name" value="Proteasome_B_A"/>
    <property type="match status" value="1"/>
</dbReference>
<dbReference type="InterPro" id="IPR029055">
    <property type="entry name" value="Ntn_hydrolases_N"/>
</dbReference>
<dbReference type="InterPro" id="IPR019983">
    <property type="entry name" value="Pept_T1A_Psome_bsu_arc"/>
</dbReference>
<dbReference type="InterPro" id="IPR000243">
    <property type="entry name" value="Pept_T1A_subB"/>
</dbReference>
<dbReference type="InterPro" id="IPR016050">
    <property type="entry name" value="Proteasome_bsu_CS"/>
</dbReference>
<dbReference type="InterPro" id="IPR001353">
    <property type="entry name" value="Proteasome_sua/b"/>
</dbReference>
<dbReference type="InterPro" id="IPR023333">
    <property type="entry name" value="Proteasome_suB-type"/>
</dbReference>
<dbReference type="NCBIfam" id="TIGR03634">
    <property type="entry name" value="arc_protsome_B"/>
    <property type="match status" value="1"/>
</dbReference>
<dbReference type="PANTHER" id="PTHR32194:SF0">
    <property type="entry name" value="ATP-DEPENDENT PROTEASE SUBUNIT HSLV"/>
    <property type="match status" value="1"/>
</dbReference>
<dbReference type="PANTHER" id="PTHR32194">
    <property type="entry name" value="METALLOPROTEASE TLDD"/>
    <property type="match status" value="1"/>
</dbReference>
<dbReference type="Pfam" id="PF00227">
    <property type="entry name" value="Proteasome"/>
    <property type="match status" value="1"/>
</dbReference>
<dbReference type="PRINTS" id="PR00141">
    <property type="entry name" value="PROTEASOME"/>
</dbReference>
<dbReference type="SUPFAM" id="SSF56235">
    <property type="entry name" value="N-terminal nucleophile aminohydrolases (Ntn hydrolases)"/>
    <property type="match status" value="1"/>
</dbReference>
<dbReference type="PROSITE" id="PS00854">
    <property type="entry name" value="PROTEASOME_BETA_1"/>
    <property type="match status" value="1"/>
</dbReference>
<dbReference type="PROSITE" id="PS51476">
    <property type="entry name" value="PROTEASOME_BETA_2"/>
    <property type="match status" value="1"/>
</dbReference>
<organism>
    <name type="scientific">Thermococcus kodakarensis (strain ATCC BAA-918 / JCM 12380 / KOD1)</name>
    <name type="common">Pyrococcus kodakaraensis (strain KOD1)</name>
    <dbReference type="NCBI Taxonomy" id="69014"/>
    <lineage>
        <taxon>Archaea</taxon>
        <taxon>Methanobacteriati</taxon>
        <taxon>Methanobacteriota</taxon>
        <taxon>Thermococci</taxon>
        <taxon>Thermococcales</taxon>
        <taxon>Thermococcaceae</taxon>
        <taxon>Thermococcus</taxon>
    </lineage>
</organism>
<sequence length="203" mass="21927">MTEKLKGTTTVGIVCKDGVVLAADRRASLGNMVLSERVTKVFQIDDHLAIAGAGTVGDILSLVRLLRAEAKLYRAKVSREMSVKALATLTSNILHSGRGFAYMAWFLVGGYDSAPRLYSIDAAGGVTEDRFTAAGSGMEFAFSVLEENYRDGIPLEEGVKLALRAIKAATKRDVFTGGGVTLVTITEEGYREWSEEELKSLLE</sequence>
<keyword id="KW-0068">Autocatalytic cleavage</keyword>
<keyword id="KW-0963">Cytoplasm</keyword>
<keyword id="KW-0378">Hydrolase</keyword>
<keyword id="KW-0645">Protease</keyword>
<keyword id="KW-0647">Proteasome</keyword>
<keyword id="KW-1185">Reference proteome</keyword>
<keyword id="KW-0888">Threonine protease</keyword>
<keyword id="KW-0865">Zymogen</keyword>
<accession>Q5JDJ9</accession>
<protein>
    <recommendedName>
        <fullName evidence="1">Proteasome subunit beta 1</fullName>
        <ecNumber evidence="1">3.4.25.1</ecNumber>
    </recommendedName>
    <alternativeName>
        <fullName evidence="1">20S proteasome beta subunit 1</fullName>
    </alternativeName>
    <alternativeName>
        <fullName evidence="1">Proteasome core protein PsmB 1</fullName>
    </alternativeName>
</protein>
<name>PSB1_THEKO</name>
<feature type="propeptide" id="PRO_0000397414" description="Removed in mature form; by autocatalysis" evidence="1">
    <location>
        <begin position="1"/>
        <end position="7"/>
    </location>
</feature>
<feature type="chain" id="PRO_0000397415" description="Proteasome subunit beta 1">
    <location>
        <begin position="8"/>
        <end position="203"/>
    </location>
</feature>
<feature type="active site" description="Nucleophile" evidence="1">
    <location>
        <position position="8"/>
    </location>
</feature>
<proteinExistence type="inferred from homology"/>